<reference key="1">
    <citation type="journal article" date="1996" name="J. Mol. Biol.">
        <title>Holliday junction resolvases encoded by homologous rusA genes in Escherichia coli K-12 and phage 82.</title>
        <authorList>
            <person name="Mahdi A.A."/>
            <person name="Sharples G.J."/>
            <person name="Mandal T.N."/>
            <person name="Lloyd R.G."/>
        </authorList>
    </citation>
    <scope>NUCLEOTIDE SEQUENCE [GENOMIC DNA]</scope>
    <source>
        <strain>K12 / MG1655 / ATCC 47076</strain>
    </source>
</reference>
<reference key="2">
    <citation type="submission" date="1997-01" db="EMBL/GenBank/DDBJ databases">
        <title>Sequence of minutes 4-25 of Escherichia coli.</title>
        <authorList>
            <person name="Chung E."/>
            <person name="Allen E."/>
            <person name="Araujo R."/>
            <person name="Aparicio A.M."/>
            <person name="Davis K."/>
            <person name="Duncan M."/>
            <person name="Federspiel N."/>
            <person name="Hyman R."/>
            <person name="Kalman S."/>
            <person name="Komp C."/>
            <person name="Kurdi O."/>
            <person name="Lew H."/>
            <person name="Lin D."/>
            <person name="Namath A."/>
            <person name="Oefner P."/>
            <person name="Roberts D."/>
            <person name="Schramm S."/>
            <person name="Davis R.W."/>
        </authorList>
    </citation>
    <scope>NUCLEOTIDE SEQUENCE [LARGE SCALE GENOMIC DNA]</scope>
    <source>
        <strain>K12 / MG1655 / ATCC 47076</strain>
    </source>
</reference>
<reference key="3">
    <citation type="journal article" date="1997" name="Science">
        <title>The complete genome sequence of Escherichia coli K-12.</title>
        <authorList>
            <person name="Blattner F.R."/>
            <person name="Plunkett G. III"/>
            <person name="Bloch C.A."/>
            <person name="Perna N.T."/>
            <person name="Burland V."/>
            <person name="Riley M."/>
            <person name="Collado-Vides J."/>
            <person name="Glasner J.D."/>
            <person name="Rode C.K."/>
            <person name="Mayhew G.F."/>
            <person name="Gregor J."/>
            <person name="Davis N.W."/>
            <person name="Kirkpatrick H.A."/>
            <person name="Goeden M.A."/>
            <person name="Rose D.J."/>
            <person name="Mau B."/>
            <person name="Shao Y."/>
        </authorList>
    </citation>
    <scope>NUCLEOTIDE SEQUENCE [LARGE SCALE GENOMIC DNA]</scope>
    <source>
        <strain>K12 / MG1655 / ATCC 47076</strain>
    </source>
</reference>
<reference key="4">
    <citation type="journal article" date="2006" name="Mol. Syst. Biol.">
        <title>Highly accurate genome sequences of Escherichia coli K-12 strains MG1655 and W3110.</title>
        <authorList>
            <person name="Hayashi K."/>
            <person name="Morooka N."/>
            <person name="Yamamoto Y."/>
            <person name="Fujita K."/>
            <person name="Isono K."/>
            <person name="Choi S."/>
            <person name="Ohtsubo E."/>
            <person name="Baba T."/>
            <person name="Wanner B.L."/>
            <person name="Mori H."/>
            <person name="Horiuchi T."/>
        </authorList>
    </citation>
    <scope>NUCLEOTIDE SEQUENCE [LARGE SCALE GENOMIC DNA]</scope>
    <source>
        <strain>K12 / W3110 / ATCC 27325 / DSM 5911</strain>
    </source>
</reference>
<gene>
    <name type="primary">ybcN</name>
    <name type="ordered locus">b0547</name>
    <name type="ordered locus">JW0535</name>
</gene>
<evidence type="ECO:0000305" key="1"/>
<organism>
    <name type="scientific">Escherichia coli (strain K12)</name>
    <dbReference type="NCBI Taxonomy" id="83333"/>
    <lineage>
        <taxon>Bacteria</taxon>
        <taxon>Pseudomonadati</taxon>
        <taxon>Pseudomonadota</taxon>
        <taxon>Gammaproteobacteria</taxon>
        <taxon>Enterobacterales</taxon>
        <taxon>Enterobacteriaceae</taxon>
        <taxon>Escherichia</taxon>
    </lineage>
</organism>
<proteinExistence type="predicted"/>
<dbReference type="EMBL" id="X92587">
    <property type="protein sequence ID" value="CAA63318.1"/>
    <property type="molecule type" value="Genomic_DNA"/>
</dbReference>
<dbReference type="EMBL" id="U82598">
    <property type="protein sequence ID" value="AAB40744.1"/>
    <property type="molecule type" value="Genomic_DNA"/>
</dbReference>
<dbReference type="EMBL" id="U00096">
    <property type="protein sequence ID" value="AAC73648.1"/>
    <property type="molecule type" value="Genomic_DNA"/>
</dbReference>
<dbReference type="EMBL" id="AP009048">
    <property type="protein sequence ID" value="BAE76322.1"/>
    <property type="molecule type" value="Genomic_DNA"/>
</dbReference>
<dbReference type="PIR" id="S66587">
    <property type="entry name" value="S66587"/>
</dbReference>
<dbReference type="RefSeq" id="NP_415079.1">
    <property type="nucleotide sequence ID" value="NC_000913.3"/>
</dbReference>
<dbReference type="RefSeq" id="WP_001054340.1">
    <property type="nucleotide sequence ID" value="NZ_LN832404.1"/>
</dbReference>
<dbReference type="BioGRID" id="4259876">
    <property type="interactions" value="289"/>
</dbReference>
<dbReference type="FunCoup" id="Q47269">
    <property type="interactions" value="243"/>
</dbReference>
<dbReference type="IntAct" id="Q47269">
    <property type="interactions" value="7"/>
</dbReference>
<dbReference type="STRING" id="511145.b0547"/>
<dbReference type="PaxDb" id="511145-b0547"/>
<dbReference type="EnsemblBacteria" id="AAC73648">
    <property type="protein sequence ID" value="AAC73648"/>
    <property type="gene ID" value="b0547"/>
</dbReference>
<dbReference type="GeneID" id="945162"/>
<dbReference type="KEGG" id="ecj:JW0535"/>
<dbReference type="KEGG" id="eco:b0547"/>
<dbReference type="KEGG" id="ecoc:C3026_02695"/>
<dbReference type="PATRIC" id="fig|511145.12.peg.569"/>
<dbReference type="EchoBASE" id="EB3395"/>
<dbReference type="eggNOG" id="ENOG502ZWCQ">
    <property type="taxonomic scope" value="Bacteria"/>
</dbReference>
<dbReference type="HOGENOM" id="CLU_150540_0_0_6"/>
<dbReference type="InParanoid" id="Q47269"/>
<dbReference type="OMA" id="GEMYIFL"/>
<dbReference type="OrthoDB" id="7061352at2"/>
<dbReference type="BioCyc" id="EcoCyc:G6303-MONOMER"/>
<dbReference type="PRO" id="PR:Q47269"/>
<dbReference type="Proteomes" id="UP000000625">
    <property type="component" value="Chromosome"/>
</dbReference>
<dbReference type="GO" id="GO:0000405">
    <property type="term" value="F:bubble DNA binding"/>
    <property type="evidence" value="ECO:0000314"/>
    <property type="project" value="EcoCyc"/>
</dbReference>
<dbReference type="GO" id="GO:0003697">
    <property type="term" value="F:single-stranded DNA binding"/>
    <property type="evidence" value="ECO:0000314"/>
    <property type="project" value="EcoCyc"/>
</dbReference>
<dbReference type="FunFam" id="1.10.3790.10:FF:000001">
    <property type="entry name" value="DLP12 prophage DNA base-flipping protein"/>
    <property type="match status" value="1"/>
</dbReference>
<dbReference type="Gene3D" id="1.10.3790.10">
    <property type="entry name" value="NinB"/>
    <property type="match status" value="1"/>
</dbReference>
<dbReference type="InterPro" id="IPR036619">
    <property type="entry name" value="NinB_sf"/>
</dbReference>
<dbReference type="NCBIfam" id="NF007281">
    <property type="entry name" value="PRK09741.1"/>
    <property type="match status" value="1"/>
</dbReference>
<dbReference type="SUPFAM" id="SSF103370">
    <property type="entry name" value="NinB"/>
    <property type="match status" value="1"/>
</dbReference>
<accession>Q47269</accession>
<accession>Q2MBN4</accession>
<feature type="chain" id="PRO_0000168652" description="Uncharacterized protein YbcN">
    <location>
        <begin position="1"/>
        <end position="151"/>
    </location>
</feature>
<comment type="miscellaneous">
    <text>Encoded by the cryptic lambdoid prophage DLP12.</text>
</comment>
<comment type="similarity">
    <text evidence="1">To equivalent protein in phage 82.</text>
</comment>
<sequence length="151" mass="17433">MNLSQDGIKLHRGNFTAIGRQIQPYLEEGKCFRMVLKPWREKRSLSQNALSHMWYSEISEYLISRGKTFATPAWVKDALKHTYLGYETKDLVDVVTGDITTIQSLRHTSDLDTGEMYVFLCKVEAWAMNIGCHLTIPQSCEFQLLRDKQEA</sequence>
<keyword id="KW-1185">Reference proteome</keyword>
<name>YBCN_ECOLI</name>
<protein>
    <recommendedName>
        <fullName>Uncharacterized protein YbcN</fullName>
    </recommendedName>
</protein>